<name>RRP15_CAEEL</name>
<accession>P91318</accession>
<comment type="similarity">
    <text evidence="3">Belongs to the RRP15 family.</text>
</comment>
<gene>
    <name type="ORF">F53E10.6</name>
</gene>
<sequence>MSTKNRDRLVVTEDSDDDNEREEMSSGGESGEEGPSSVDGGAGDADETVAFPAIERRKKKVIKKLTKKEQSLKKSVKEYRIKLALVKPDITTDREKERNLRRVATKGVVQLFNAVSDRQKTMSDAVKEKMTARERREARQRFDGKNFDSDRFADSGYVGAKKEVKGEDDDGEDQMDIGEEQIDTGNYSDED</sequence>
<keyword id="KW-0175">Coiled coil</keyword>
<keyword id="KW-1185">Reference proteome</keyword>
<reference key="1">
    <citation type="journal article" date="1998" name="Science">
        <title>Genome sequence of the nematode C. elegans: a platform for investigating biology.</title>
        <authorList>
            <consortium name="The C. elegans sequencing consortium"/>
        </authorList>
    </citation>
    <scope>NUCLEOTIDE SEQUENCE [LARGE SCALE GENOMIC DNA]</scope>
    <source>
        <strain>Bristol N2</strain>
    </source>
</reference>
<feature type="chain" id="PRO_0000273218" description="RRP15-like protein">
    <location>
        <begin position="1"/>
        <end position="191"/>
    </location>
</feature>
<feature type="region of interest" description="Disordered" evidence="2">
    <location>
        <begin position="1"/>
        <end position="52"/>
    </location>
</feature>
<feature type="region of interest" description="Disordered" evidence="2">
    <location>
        <begin position="119"/>
        <end position="191"/>
    </location>
</feature>
<feature type="coiled-coil region" evidence="1">
    <location>
        <begin position="53"/>
        <end position="84"/>
    </location>
</feature>
<feature type="compositionally biased region" description="Basic and acidic residues" evidence="2">
    <location>
        <begin position="1"/>
        <end position="11"/>
    </location>
</feature>
<feature type="compositionally biased region" description="Basic and acidic residues" evidence="2">
    <location>
        <begin position="119"/>
        <end position="153"/>
    </location>
</feature>
<feature type="compositionally biased region" description="Acidic residues" evidence="2">
    <location>
        <begin position="166"/>
        <end position="191"/>
    </location>
</feature>
<protein>
    <recommendedName>
        <fullName>RRP15-like protein</fullName>
    </recommendedName>
</protein>
<proteinExistence type="inferred from homology"/>
<organism>
    <name type="scientific">Caenorhabditis elegans</name>
    <dbReference type="NCBI Taxonomy" id="6239"/>
    <lineage>
        <taxon>Eukaryota</taxon>
        <taxon>Metazoa</taxon>
        <taxon>Ecdysozoa</taxon>
        <taxon>Nematoda</taxon>
        <taxon>Chromadorea</taxon>
        <taxon>Rhabditida</taxon>
        <taxon>Rhabditina</taxon>
        <taxon>Rhabditomorpha</taxon>
        <taxon>Rhabditoidea</taxon>
        <taxon>Rhabditidae</taxon>
        <taxon>Peloderinae</taxon>
        <taxon>Caenorhabditis</taxon>
    </lineage>
</organism>
<dbReference type="EMBL" id="FO080714">
    <property type="protein sequence ID" value="CCD66103.1"/>
    <property type="molecule type" value="Genomic_DNA"/>
</dbReference>
<dbReference type="PIR" id="T25791">
    <property type="entry name" value="T25791"/>
</dbReference>
<dbReference type="RefSeq" id="NP_503713.1">
    <property type="nucleotide sequence ID" value="NM_071312.4"/>
</dbReference>
<dbReference type="SMR" id="P91318"/>
<dbReference type="BioGRID" id="43785">
    <property type="interactions" value="5"/>
</dbReference>
<dbReference type="FunCoup" id="P91318">
    <property type="interactions" value="7"/>
</dbReference>
<dbReference type="IntAct" id="P91318">
    <property type="interactions" value="1"/>
</dbReference>
<dbReference type="STRING" id="6239.F53E10.6.1"/>
<dbReference type="PaxDb" id="6239-F53E10.6"/>
<dbReference type="PeptideAtlas" id="P91318"/>
<dbReference type="EnsemblMetazoa" id="F53E10.6.1">
    <property type="protein sequence ID" value="F53E10.6.1"/>
    <property type="gene ID" value="WBGene00018762"/>
</dbReference>
<dbReference type="GeneID" id="178728"/>
<dbReference type="KEGG" id="cel:CELE_F53E10.6"/>
<dbReference type="UCSC" id="F53E10.6.1">
    <property type="organism name" value="c. elegans"/>
</dbReference>
<dbReference type="AGR" id="WB:WBGene00018762"/>
<dbReference type="CTD" id="178728"/>
<dbReference type="WormBase" id="F53E10.6">
    <property type="protein sequence ID" value="CE10930"/>
    <property type="gene ID" value="WBGene00018762"/>
</dbReference>
<dbReference type="eggNOG" id="KOG2974">
    <property type="taxonomic scope" value="Eukaryota"/>
</dbReference>
<dbReference type="HOGENOM" id="CLU_1435660_0_0_1"/>
<dbReference type="InParanoid" id="P91318"/>
<dbReference type="OMA" id="MSTKNRD"/>
<dbReference type="OrthoDB" id="20949at2759"/>
<dbReference type="PRO" id="PR:P91318"/>
<dbReference type="Proteomes" id="UP000001940">
    <property type="component" value="Chromosome V"/>
</dbReference>
<dbReference type="Bgee" id="WBGene00018762">
    <property type="expression patterns" value="Expressed in larva and 4 other cell types or tissues"/>
</dbReference>
<dbReference type="GO" id="GO:0030687">
    <property type="term" value="C:preribosome, large subunit precursor"/>
    <property type="evidence" value="ECO:0000318"/>
    <property type="project" value="GO_Central"/>
</dbReference>
<dbReference type="GO" id="GO:0000460">
    <property type="term" value="P:maturation of 5.8S rRNA"/>
    <property type="evidence" value="ECO:0000318"/>
    <property type="project" value="GO_Central"/>
</dbReference>
<dbReference type="GO" id="GO:0000470">
    <property type="term" value="P:maturation of LSU-rRNA"/>
    <property type="evidence" value="ECO:0000318"/>
    <property type="project" value="GO_Central"/>
</dbReference>
<dbReference type="InterPro" id="IPR012459">
    <property type="entry name" value="Rrp15"/>
</dbReference>
<dbReference type="PANTHER" id="PTHR13245">
    <property type="entry name" value="RRP15-LIKE PROTEIN"/>
    <property type="match status" value="1"/>
</dbReference>
<dbReference type="PANTHER" id="PTHR13245:SF14">
    <property type="entry name" value="RRP15-LIKE PROTEIN"/>
    <property type="match status" value="1"/>
</dbReference>
<dbReference type="Pfam" id="PF07890">
    <property type="entry name" value="Rrp15p"/>
    <property type="match status" value="1"/>
</dbReference>
<evidence type="ECO:0000255" key="1"/>
<evidence type="ECO:0000256" key="2">
    <source>
        <dbReference type="SAM" id="MobiDB-lite"/>
    </source>
</evidence>
<evidence type="ECO:0000305" key="3"/>